<gene>
    <name type="primary">cyc</name>
</gene>
<name>CY550_PARVE</name>
<sequence length="154" mass="16138">MKISIYATLAALSLALPAVAQEGDAAKGEKEFNKCKACHMVQAPDGTDIVKGGKTGPNLYGVVGRKIASVEGFKYGDGILEVAEKNPDMVWSEADLIEYVTDPKPWLVEKTGDSAAKTKMTFKLGKNQADVVAFLAQHSPDAGAEAAPAEGAAN</sequence>
<keyword id="KW-0002">3D-structure</keyword>
<keyword id="KW-0903">Direct protein sequencing</keyword>
<keyword id="KW-0249">Electron transport</keyword>
<keyword id="KW-0349">Heme</keyword>
<keyword id="KW-0408">Iron</keyword>
<keyword id="KW-0479">Metal-binding</keyword>
<keyword id="KW-0873">Pyrrolidone carboxylic acid</keyword>
<keyword id="KW-0732">Signal</keyword>
<keyword id="KW-0813">Transport</keyword>
<proteinExistence type="evidence at protein level"/>
<protein>
    <recommendedName>
        <fullName>Cytochrome c-550</fullName>
    </recommendedName>
    <alternativeName>
        <fullName>Cytochrome c550</fullName>
    </alternativeName>
</protein>
<evidence type="ECO:0000250" key="1"/>
<evidence type="ECO:0000255" key="2">
    <source>
        <dbReference type="PROSITE-ProRule" id="PRU00433"/>
    </source>
</evidence>
<evidence type="ECO:0007829" key="3">
    <source>
        <dbReference type="PDB" id="2BH4"/>
    </source>
</evidence>
<accession>Q00499</accession>
<comment type="PTM">
    <text>Binds 1 heme c group covalently per subunit.</text>
</comment>
<organism>
    <name type="scientific">Paracoccus versutus</name>
    <name type="common">Thiobacillus versutus</name>
    <dbReference type="NCBI Taxonomy" id="34007"/>
    <lineage>
        <taxon>Bacteria</taxon>
        <taxon>Pseudomonadati</taxon>
        <taxon>Pseudomonadota</taxon>
        <taxon>Alphaproteobacteria</taxon>
        <taxon>Rhodobacterales</taxon>
        <taxon>Paracoccaceae</taxon>
        <taxon>Paracoccus</taxon>
    </lineage>
</organism>
<feature type="signal peptide">
    <location>
        <begin position="1"/>
        <end position="20"/>
    </location>
</feature>
<feature type="chain" id="PRO_0000006525" description="Cytochrome c-550">
    <location>
        <begin position="21"/>
        <end position="149"/>
    </location>
</feature>
<feature type="propeptide" id="PRO_0000006526" evidence="1">
    <location>
        <begin position="150"/>
        <end position="154"/>
    </location>
</feature>
<feature type="binding site" description="covalent" evidence="2">
    <location>
        <position position="35"/>
    </location>
    <ligand>
        <name>heme c</name>
        <dbReference type="ChEBI" id="CHEBI:61717"/>
    </ligand>
</feature>
<feature type="binding site" description="covalent" evidence="2">
    <location>
        <position position="38"/>
    </location>
    <ligand>
        <name>heme c</name>
        <dbReference type="ChEBI" id="CHEBI:61717"/>
    </ligand>
</feature>
<feature type="binding site" description="axial binding residue" evidence="2">
    <location>
        <position position="39"/>
    </location>
    <ligand>
        <name>heme c</name>
        <dbReference type="ChEBI" id="CHEBI:61717"/>
    </ligand>
    <ligandPart>
        <name>Fe</name>
        <dbReference type="ChEBI" id="CHEBI:18248"/>
    </ligandPart>
</feature>
<feature type="binding site" description="axial binding residue" evidence="2">
    <location>
        <position position="120"/>
    </location>
    <ligand>
        <name>heme c</name>
        <dbReference type="ChEBI" id="CHEBI:61717"/>
    </ligand>
    <ligandPart>
        <name>Fe</name>
        <dbReference type="ChEBI" id="CHEBI:18248"/>
    </ligandPart>
</feature>
<feature type="modified residue" description="Pyrrolidone carboxylic acid" evidence="1">
    <location>
        <position position="21"/>
    </location>
</feature>
<feature type="helix" evidence="3">
    <location>
        <begin position="25"/>
        <end position="31"/>
    </location>
</feature>
<feature type="helix" evidence="3">
    <location>
        <begin position="32"/>
        <end position="34"/>
    </location>
</feature>
<feature type="turn" evidence="3">
    <location>
        <begin position="35"/>
        <end position="38"/>
    </location>
</feature>
<feature type="strand" evidence="3">
    <location>
        <begin position="48"/>
        <end position="50"/>
    </location>
</feature>
<feature type="strand" evidence="3">
    <location>
        <begin position="54"/>
        <end position="56"/>
    </location>
</feature>
<feature type="helix" evidence="3">
    <location>
        <begin position="77"/>
        <end position="85"/>
    </location>
</feature>
<feature type="helix" evidence="3">
    <location>
        <begin position="93"/>
        <end position="101"/>
    </location>
</feature>
<feature type="helix" evidence="3">
    <location>
        <begin position="103"/>
        <end position="111"/>
    </location>
</feature>
<feature type="helix" evidence="3">
    <location>
        <begin position="128"/>
        <end position="137"/>
    </location>
</feature>
<dbReference type="EMBL" id="X62808">
    <property type="protein sequence ID" value="CAA44627.1"/>
    <property type="molecule type" value="Genomic_DNA"/>
</dbReference>
<dbReference type="PIR" id="S23630">
    <property type="entry name" value="S23630"/>
</dbReference>
<dbReference type="RefSeq" id="WP_036751693.1">
    <property type="nucleotide sequence ID" value="NZ_QUMX01000057.1"/>
</dbReference>
<dbReference type="PDB" id="2BGV">
    <property type="method" value="X-ray"/>
    <property type="resolution" value="1.90 A"/>
    <property type="chains" value="X=21-154"/>
</dbReference>
<dbReference type="PDB" id="2BH4">
    <property type="method" value="X-ray"/>
    <property type="resolution" value="1.55 A"/>
    <property type="chains" value="X=21-154"/>
</dbReference>
<dbReference type="PDB" id="2BH5">
    <property type="method" value="X-ray"/>
    <property type="resolution" value="1.95 A"/>
    <property type="chains" value="X=21-154"/>
</dbReference>
<dbReference type="PDBsum" id="2BGV"/>
<dbReference type="PDBsum" id="2BH4"/>
<dbReference type="PDBsum" id="2BH5"/>
<dbReference type="SMR" id="Q00499"/>
<dbReference type="eggNOG" id="COG3474">
    <property type="taxonomic scope" value="Bacteria"/>
</dbReference>
<dbReference type="OrthoDB" id="9805828at2"/>
<dbReference type="EvolutionaryTrace" id="Q00499"/>
<dbReference type="GO" id="GO:0009055">
    <property type="term" value="F:electron transfer activity"/>
    <property type="evidence" value="ECO:0007669"/>
    <property type="project" value="InterPro"/>
</dbReference>
<dbReference type="GO" id="GO:0020037">
    <property type="term" value="F:heme binding"/>
    <property type="evidence" value="ECO:0007669"/>
    <property type="project" value="InterPro"/>
</dbReference>
<dbReference type="GO" id="GO:0046872">
    <property type="term" value="F:metal ion binding"/>
    <property type="evidence" value="ECO:0007669"/>
    <property type="project" value="UniProtKB-KW"/>
</dbReference>
<dbReference type="Gene3D" id="1.10.760.10">
    <property type="entry name" value="Cytochrome c-like domain"/>
    <property type="match status" value="1"/>
</dbReference>
<dbReference type="InterPro" id="IPR009056">
    <property type="entry name" value="Cyt_c-like_dom"/>
</dbReference>
<dbReference type="InterPro" id="IPR036909">
    <property type="entry name" value="Cyt_c-like_dom_sf"/>
</dbReference>
<dbReference type="InterPro" id="IPR002327">
    <property type="entry name" value="Cyt_c_1A/1B"/>
</dbReference>
<dbReference type="PANTHER" id="PTHR11961">
    <property type="entry name" value="CYTOCHROME C"/>
    <property type="match status" value="1"/>
</dbReference>
<dbReference type="SUPFAM" id="SSF46626">
    <property type="entry name" value="Cytochrome c"/>
    <property type="match status" value="1"/>
</dbReference>
<dbReference type="PROSITE" id="PS51007">
    <property type="entry name" value="CYTC"/>
    <property type="match status" value="1"/>
</dbReference>
<reference key="1">
    <citation type="journal article" date="1992" name="J. Bacteriol.">
        <title>Cytochrome c550 from Thiobacillus versutus: cloning, expression in Escherichia coli, and purification of the heterologous holoprotein.</title>
        <authorList>
            <person name="Ubbink M."/>
            <person name="van Beeumen J."/>
            <person name="Canters G.W."/>
        </authorList>
    </citation>
    <scope>NUCLEOTIDE SEQUENCE [GENOMIC DNA]</scope>
    <source>
        <strain>ATCC 25364 / DSM 582 / JCM 20754 / NBRC 14567 / VKM B-2163</strain>
    </source>
</reference>
<reference key="2">
    <citation type="journal article" date="1996" name="Eur. J. Biochem.">
        <title>The influence of the peptide chain on the kinetics and stability of microperoxidases.</title>
        <authorList>
            <person name="Spee J.H."/>
            <person name="Boersma M.G."/>
            <person name="Veeger C."/>
            <person name="Samyn B."/>
            <person name="Van Beeumen J."/>
            <person name="Warmerdam G."/>
            <person name="Canters G.W."/>
            <person name="Van Dongen W.M.A.M."/>
            <person name="Rietjens I.M.C.M."/>
        </authorList>
    </citation>
    <scope>PROTEIN SEQUENCE OF 37-42</scope>
</reference>